<proteinExistence type="evidence at transcript level"/>
<protein>
    <recommendedName>
        <fullName>Claudin-4</fullName>
    </recommendedName>
</protein>
<reference key="1">
    <citation type="submission" date="2004-07" db="EMBL/GenBank/DDBJ databases">
        <title>Localization of claudin proteins in bovine kidneys.</title>
        <authorList>
            <person name="Ohta H."/>
            <person name="Takiguchi M."/>
            <person name="Inaba M."/>
        </authorList>
    </citation>
    <scope>NUCLEOTIDE SEQUENCE [MRNA]</scope>
    <source>
        <tissue>Kidney</tissue>
    </source>
</reference>
<reference key="2">
    <citation type="submission" date="2005-09" db="EMBL/GenBank/DDBJ databases">
        <authorList>
            <consortium name="NIH - Mammalian Gene Collection (MGC) project"/>
        </authorList>
    </citation>
    <scope>NUCLEOTIDE SEQUENCE [LARGE SCALE MRNA]</scope>
    <source>
        <strain>Hereford</strain>
        <tissue>Uterus</tissue>
    </source>
</reference>
<organism>
    <name type="scientific">Bos taurus</name>
    <name type="common">Bovine</name>
    <dbReference type="NCBI Taxonomy" id="9913"/>
    <lineage>
        <taxon>Eukaryota</taxon>
        <taxon>Metazoa</taxon>
        <taxon>Chordata</taxon>
        <taxon>Craniata</taxon>
        <taxon>Vertebrata</taxon>
        <taxon>Euteleostomi</taxon>
        <taxon>Mammalia</taxon>
        <taxon>Eutheria</taxon>
        <taxon>Laurasiatheria</taxon>
        <taxon>Artiodactyla</taxon>
        <taxon>Ruminantia</taxon>
        <taxon>Pecora</taxon>
        <taxon>Bovidae</taxon>
        <taxon>Bovinae</taxon>
        <taxon>Bos</taxon>
    </lineage>
</organism>
<evidence type="ECO:0000250" key="1">
    <source>
        <dbReference type="UniProtKB" id="O14493"/>
    </source>
</evidence>
<evidence type="ECO:0000250" key="2">
    <source>
        <dbReference type="UniProtKB" id="O35054"/>
    </source>
</evidence>
<evidence type="ECO:0000255" key="3"/>
<evidence type="ECO:0000305" key="4"/>
<feature type="chain" id="PRO_0000144741" description="Claudin-4">
    <location>
        <begin position="1"/>
        <end position="209"/>
    </location>
</feature>
<feature type="topological domain" description="Cytoplasmic" evidence="3">
    <location>
        <begin position="1"/>
        <end position="9"/>
    </location>
</feature>
<feature type="transmembrane region" description="Helical" evidence="3">
    <location>
        <begin position="10"/>
        <end position="30"/>
    </location>
</feature>
<feature type="topological domain" description="Extracellular" evidence="3">
    <location>
        <begin position="31"/>
        <end position="81"/>
    </location>
</feature>
<feature type="transmembrane region" description="Helical" evidence="3">
    <location>
        <begin position="82"/>
        <end position="102"/>
    </location>
</feature>
<feature type="topological domain" description="Cytoplasmic" evidence="3">
    <location>
        <begin position="103"/>
        <end position="117"/>
    </location>
</feature>
<feature type="transmembrane region" description="Helical" evidence="3">
    <location>
        <begin position="118"/>
        <end position="138"/>
    </location>
</feature>
<feature type="topological domain" description="Extracellular" evidence="3">
    <location>
        <begin position="139"/>
        <end position="160"/>
    </location>
</feature>
<feature type="transmembrane region" description="Helical" evidence="3">
    <location>
        <begin position="161"/>
        <end position="181"/>
    </location>
</feature>
<feature type="topological domain" description="Cytoplasmic" evidence="3">
    <location>
        <begin position="182"/>
        <end position="209"/>
    </location>
</feature>
<feature type="region of interest" description="Interaction with EPHA2" evidence="1">
    <location>
        <begin position="1"/>
        <end position="103"/>
    </location>
</feature>
<feature type="region of interest" description="Interactions with TJP1, TJP2 and TJP3" evidence="2">
    <location>
        <begin position="208"/>
        <end position="209"/>
    </location>
</feature>
<feature type="modified residue" description="Phosphotyrosine; by EPHA2" evidence="1">
    <location>
        <position position="208"/>
    </location>
</feature>
<feature type="disulfide bond" evidence="1">
    <location>
        <begin position="54"/>
        <end position="64"/>
    </location>
</feature>
<dbReference type="EMBL" id="AB185928">
    <property type="protein sequence ID" value="BAD34533.1"/>
    <property type="molecule type" value="mRNA"/>
</dbReference>
<dbReference type="EMBL" id="BC105534">
    <property type="protein sequence ID" value="AAI05535.1"/>
    <property type="molecule type" value="mRNA"/>
</dbReference>
<dbReference type="RefSeq" id="NP_001014413.1">
    <property type="nucleotide sequence ID" value="NM_001014391.2"/>
</dbReference>
<dbReference type="SMR" id="Q6BBL6"/>
<dbReference type="FunCoup" id="Q6BBL6">
    <property type="interactions" value="256"/>
</dbReference>
<dbReference type="STRING" id="9913.ENSBTAP00000037110"/>
<dbReference type="PaxDb" id="9913-ENSBTAP00000037110"/>
<dbReference type="Ensembl" id="ENSBTAT00000037275.6">
    <property type="protein sequence ID" value="ENSBTAP00000037110.4"/>
    <property type="gene ID" value="ENSBTAG00000026278.6"/>
</dbReference>
<dbReference type="GeneID" id="414921"/>
<dbReference type="KEGG" id="bta:414921"/>
<dbReference type="CTD" id="1364"/>
<dbReference type="VEuPathDB" id="HostDB:ENSBTAG00000026278"/>
<dbReference type="VGNC" id="VGNC:27416">
    <property type="gene designation" value="CLDN4"/>
</dbReference>
<dbReference type="eggNOG" id="ENOG502QSCN">
    <property type="taxonomic scope" value="Eukaryota"/>
</dbReference>
<dbReference type="GeneTree" id="ENSGT00940000154762"/>
<dbReference type="HOGENOM" id="CLU_076370_1_2_1"/>
<dbReference type="InParanoid" id="Q6BBL6"/>
<dbReference type="OMA" id="NCPPRAD"/>
<dbReference type="OrthoDB" id="8830244at2759"/>
<dbReference type="TreeFam" id="TF331936"/>
<dbReference type="Proteomes" id="UP000009136">
    <property type="component" value="Chromosome 25"/>
</dbReference>
<dbReference type="Bgee" id="ENSBTAG00000026278">
    <property type="expression patterns" value="Expressed in placenta and 80 other cell types or tissues"/>
</dbReference>
<dbReference type="GO" id="GO:0005923">
    <property type="term" value="C:bicellular tight junction"/>
    <property type="evidence" value="ECO:0000250"/>
    <property type="project" value="UniProtKB"/>
</dbReference>
<dbReference type="GO" id="GO:0034707">
    <property type="term" value="C:chloride channel complex"/>
    <property type="evidence" value="ECO:0007669"/>
    <property type="project" value="UniProtKB-KW"/>
</dbReference>
<dbReference type="GO" id="GO:0005886">
    <property type="term" value="C:plasma membrane"/>
    <property type="evidence" value="ECO:0000318"/>
    <property type="project" value="GO_Central"/>
</dbReference>
<dbReference type="GO" id="GO:0005254">
    <property type="term" value="F:chloride channel activity"/>
    <property type="evidence" value="ECO:0007669"/>
    <property type="project" value="UniProtKB-KW"/>
</dbReference>
<dbReference type="GO" id="GO:0042802">
    <property type="term" value="F:identical protein binding"/>
    <property type="evidence" value="ECO:0000250"/>
    <property type="project" value="UniProtKB"/>
</dbReference>
<dbReference type="GO" id="GO:0005198">
    <property type="term" value="F:structural molecule activity"/>
    <property type="evidence" value="ECO:0007669"/>
    <property type="project" value="InterPro"/>
</dbReference>
<dbReference type="GO" id="GO:0070830">
    <property type="term" value="P:bicellular tight junction assembly"/>
    <property type="evidence" value="ECO:0000318"/>
    <property type="project" value="GO_Central"/>
</dbReference>
<dbReference type="GO" id="GO:0016338">
    <property type="term" value="P:calcium-independent cell-cell adhesion via plasma membrane cell-adhesion molecules"/>
    <property type="evidence" value="ECO:0000250"/>
    <property type="project" value="UniProtKB"/>
</dbReference>
<dbReference type="GO" id="GO:0007155">
    <property type="term" value="P:cell adhesion"/>
    <property type="evidence" value="ECO:0000318"/>
    <property type="project" value="GO_Central"/>
</dbReference>
<dbReference type="GO" id="GO:0061436">
    <property type="term" value="P:establishment of skin barrier"/>
    <property type="evidence" value="ECO:0007669"/>
    <property type="project" value="Ensembl"/>
</dbReference>
<dbReference type="GO" id="GO:0160184">
    <property type="term" value="P:paracellular transport"/>
    <property type="evidence" value="ECO:0000250"/>
    <property type="project" value="UniProtKB"/>
</dbReference>
<dbReference type="GO" id="GO:0030335">
    <property type="term" value="P:positive regulation of cell migration"/>
    <property type="evidence" value="ECO:0007669"/>
    <property type="project" value="Ensembl"/>
</dbReference>
<dbReference type="GO" id="GO:0090303">
    <property type="term" value="P:positive regulation of wound healing"/>
    <property type="evidence" value="ECO:0007669"/>
    <property type="project" value="Ensembl"/>
</dbReference>
<dbReference type="GO" id="GO:0022604">
    <property type="term" value="P:regulation of cell morphogenesis"/>
    <property type="evidence" value="ECO:0007669"/>
    <property type="project" value="Ensembl"/>
</dbReference>
<dbReference type="GO" id="GO:0070293">
    <property type="term" value="P:renal absorption"/>
    <property type="evidence" value="ECO:0000250"/>
    <property type="project" value="UniProtKB"/>
</dbReference>
<dbReference type="FunFam" id="1.20.140.150:FF:000001">
    <property type="entry name" value="Claudin"/>
    <property type="match status" value="1"/>
</dbReference>
<dbReference type="Gene3D" id="1.20.140.150">
    <property type="match status" value="1"/>
</dbReference>
<dbReference type="InterPro" id="IPR006187">
    <property type="entry name" value="Claudin"/>
</dbReference>
<dbReference type="InterPro" id="IPR003550">
    <property type="entry name" value="Claudin4"/>
</dbReference>
<dbReference type="InterPro" id="IPR017974">
    <property type="entry name" value="Claudin_CS"/>
</dbReference>
<dbReference type="InterPro" id="IPR004031">
    <property type="entry name" value="PMP22/EMP/MP20/Claudin"/>
</dbReference>
<dbReference type="PANTHER" id="PTHR12002">
    <property type="entry name" value="CLAUDIN"/>
    <property type="match status" value="1"/>
</dbReference>
<dbReference type="Pfam" id="PF00822">
    <property type="entry name" value="PMP22_Claudin"/>
    <property type="match status" value="1"/>
</dbReference>
<dbReference type="PRINTS" id="PR01077">
    <property type="entry name" value="CLAUDIN"/>
</dbReference>
<dbReference type="PRINTS" id="PR01379">
    <property type="entry name" value="CLAUDIN4"/>
</dbReference>
<dbReference type="PROSITE" id="PS01346">
    <property type="entry name" value="CLAUDIN"/>
    <property type="match status" value="1"/>
</dbReference>
<keyword id="KW-0965">Cell junction</keyword>
<keyword id="KW-1003">Cell membrane</keyword>
<keyword id="KW-0868">Chloride</keyword>
<keyword id="KW-0869">Chloride channel</keyword>
<keyword id="KW-1015">Disulfide bond</keyword>
<keyword id="KW-0407">Ion channel</keyword>
<keyword id="KW-0406">Ion transport</keyword>
<keyword id="KW-0472">Membrane</keyword>
<keyword id="KW-0597">Phosphoprotein</keyword>
<keyword id="KW-1185">Reference proteome</keyword>
<keyword id="KW-0796">Tight junction</keyword>
<keyword id="KW-0812">Transmembrane</keyword>
<keyword id="KW-1133">Transmembrane helix</keyword>
<keyword id="KW-0813">Transport</keyword>
<name>CLD4_BOVIN</name>
<comment type="function">
    <text evidence="2">Channel-forming tight junction protein that mediates paracellular chloride transport in the kidney. Plays a critical role in the paracellular reabsorption of filtered chloride in the kidney collecting ducts. Claudins play a major role in tight junction-specific obliteration of the intercellular space, through calcium-independent cell-adhesion activity.</text>
</comment>
<comment type="subunit">
    <text evidence="1 2">Interacts with EPHA2; phosphorylates CLDN4 and may regulate tight junctions (By similarity). Directly interacts with TJP1/ZO-1, TJP2/ZO-2 and TJP3/ZO-3 (By similarity). Interacts with CLDN1 (By similarity). Interacts with CLDN8 (By similarity).</text>
</comment>
<comment type="subcellular location">
    <subcellularLocation>
        <location evidence="2">Cell junction</location>
        <location evidence="2">Tight junction</location>
    </subcellularLocation>
    <subcellularLocation>
        <location evidence="2">Cell membrane</location>
        <topology evidence="3">Multi-pass membrane protein</topology>
    </subcellularLocation>
    <text evidence="2">CLDN4 is required for tight junction localization in the kidney.</text>
</comment>
<comment type="PTM">
    <text evidence="1">Phosphorylated. Phosphorylation by EPHA2 is stimulated by EFNA1 and alters interaction with TJP1 (By similarity).</text>
</comment>
<comment type="similarity">
    <text evidence="4">Belongs to the claudin family.</text>
</comment>
<gene>
    <name type="primary">CLDN4</name>
</gene>
<sequence length="209" mass="22165">MASMGLQVMGIALAVLGWLGAILSCALPMWRVTAFIGSNIVTSQTIWEGLWMNCVVQSTGQMQCKVYDSLLALPQDLQAARALIVICIILAVFGVLLSVVGGKCTNCVDDESSKAKIMIVAGVVFLLAGLLVMVPVSWTANNVIRDFYNPLVASGQKREMGASLYVGWAAAGLLILGGALLCFNCPPRNDKPYSAKYSAARSAPASNYV</sequence>
<accession>Q6BBL6</accession>
<accession>Q2KJ40</accession>